<protein>
    <recommendedName>
        <fullName evidence="2 6">DNA-directed RNA polymerase subunit Rpo1N</fullName>
        <ecNumber evidence="2 7">2.7.7.6</ecNumber>
    </recommendedName>
    <alternativeName>
        <fullName evidence="2">DNA-directed RNA polymerase subunit A'</fullName>
    </alternativeName>
</protein>
<name>RPO1N_SACSH</name>
<keyword id="KW-0002">3D-structure</keyword>
<keyword id="KW-0963">Cytoplasm</keyword>
<keyword id="KW-0238">DNA-binding</keyword>
<keyword id="KW-0240">DNA-directed RNA polymerase</keyword>
<keyword id="KW-0460">Magnesium</keyword>
<keyword id="KW-0479">Metal-binding</keyword>
<keyword id="KW-0548">Nucleotidyltransferase</keyword>
<keyword id="KW-0804">Transcription</keyword>
<keyword id="KW-0808">Transferase</keyword>
<keyword id="KW-0862">Zinc</keyword>
<reference evidence="11 12" key="1">
    <citation type="journal article" date="2009" name="PLoS Biol.">
        <title>Evolution of complex RNA polymerases: the complete archaeal RNA polymerase structure.</title>
        <authorList>
            <person name="Korkhin Y."/>
            <person name="Unligil U.M."/>
            <person name="Littlefield O."/>
            <person name="Nelson P.J."/>
            <person name="Stuart D.I."/>
            <person name="Sigler P.B."/>
            <person name="Bell S.D."/>
            <person name="Abrescia N.G."/>
        </authorList>
    </citation>
    <scope>NUCLEOTIDE SEQUENCE [GENOMIC DNA]</scope>
    <scope>X-RAY CRYSTALLOGRAPHY (3.35 ANGSTROMS) OF THE RNA POLYMERASE COMPLEX IN COMPLEX WITH MAGNESIUM AND ZINC</scope>
    <scope>FUNCTION</scope>
    <scope>COFACTOR</scope>
    <scope>SUBUNIT</scope>
    <scope>NOMENCLATURE</scope>
    <source>
        <strain>ATCC 51178 / DSM 5389 / JCM 8931 / NBRC 15437 / B12</strain>
    </source>
</reference>
<reference evidence="10" key="2">
    <citation type="journal article" date="2021" name="Environ. Microbiol.">
        <title>New insights into the diversity and evolution of the archaeal mobilome from three complete genomes of Saccharolobus shibatae.</title>
        <authorList>
            <person name="Medvedeva S."/>
            <person name="Brandt D."/>
            <person name="Cvirkaite-Krupovic V."/>
            <person name="Liu Y."/>
            <person name="Severinov K."/>
            <person name="Ishino S."/>
            <person name="Ishino Y."/>
            <person name="Prangishvili D."/>
            <person name="Kalinowski J."/>
            <person name="Krupovic M."/>
        </authorList>
    </citation>
    <scope>NUCLEOTIDE SEQUENCE [LARGE SCALE GENOMIC DNA]</scope>
    <source>
        <strain>ATCC 51178 / DSM 5389 / JCM 8931 / NBRC 15437 / B12</strain>
    </source>
</reference>
<reference evidence="13" key="3">
    <citation type="journal article" date="2011" name="Biochem. Soc. Trans.">
        <title>Archaeal RNA polymerase: the influence of the protruding stalk in crystal packing and preliminary biophysical analysis of the Rpo13 subunit.</title>
        <authorList>
            <person name="Wojtas M."/>
            <person name="Peralta B."/>
            <person name="Ondiviela M."/>
            <person name="Mogni M."/>
            <person name="Bell S.D."/>
            <person name="Abrescia N.G."/>
        </authorList>
    </citation>
    <scope>X-RAY CRYSTALLOGRAPHY (3.80 ANGSTROMS) OF THE RNA POLYMERASE COMPLEX IN COMPLEX WITH MAGNESIUM AND ZINC</scope>
    <scope>FUNCTION</scope>
    <scope>COFACTOR</scope>
    <scope>SUBUNIT</scope>
    <source>
        <strain>ATCC 51178 / DSM 5389 / JCM 8931 / NBRC 15437 / B12</strain>
    </source>
</reference>
<reference evidence="14 15" key="4">
    <citation type="journal article" date="2012" name="Nucleic Acids Res.">
        <title>Structural and functional analyses of the interaction of archaeal RNA polymerase with DNA.</title>
        <authorList>
            <person name="Wojtas M.N."/>
            <person name="Mogni M."/>
            <person name="Millet O."/>
            <person name="Bell S.D."/>
            <person name="Abrescia N.G."/>
        </authorList>
    </citation>
    <scope>X-RAY CRYSTALLOGRAPHY (3.20 ANGSTROMS) OF THE RNA POLYMERASE COMPLEX IN COMPLEX WITH MAGNESIUM AND ZINC WITH AND WITHOUT DNA</scope>
    <scope>FUNCTION</scope>
    <scope>COFACTOR</scope>
    <scope>SUBUNIT</scope>
    <scope>SUBCELLULAR LOCATION</scope>
    <scope>DNA-BINDING</scope>
    <source>
        <strain>ATCC 51178 / DSM 5389 / JCM 8931 / NBRC 15437 / B12</strain>
    </source>
</reference>
<feature type="chain" id="PRO_0000453785" description="DNA-directed RNA polymerase subunit Rpo1N">
    <location>
        <begin position="1"/>
        <end position="880"/>
    </location>
</feature>
<feature type="binding site" evidence="2 11 12 13 14">
    <location>
        <position position="58"/>
    </location>
    <ligand>
        <name>Zn(2+)</name>
        <dbReference type="ChEBI" id="CHEBI:29105"/>
        <label>1</label>
    </ligand>
</feature>
<feature type="binding site" evidence="2 11 12 13 14">
    <location>
        <position position="61"/>
    </location>
    <ligand>
        <name>Zn(2+)</name>
        <dbReference type="ChEBI" id="CHEBI:29105"/>
        <label>1</label>
    </ligand>
</feature>
<feature type="binding site" evidence="2 11 12 13 14 15">
    <location>
        <position position="68"/>
    </location>
    <ligand>
        <name>Zn(2+)</name>
        <dbReference type="ChEBI" id="CHEBI:29105"/>
        <label>1</label>
    </ligand>
</feature>
<feature type="binding site" evidence="2 11 12 13 14 15">
    <location>
        <position position="71"/>
    </location>
    <ligand>
        <name>Zn(2+)</name>
        <dbReference type="ChEBI" id="CHEBI:29105"/>
        <label>1</label>
    </ligand>
</feature>
<feature type="binding site" evidence="9">
    <location>
        <position position="88"/>
    </location>
    <ligand>
        <name>dsDNA</name>
        <dbReference type="ChEBI" id="CHEBI:4705"/>
    </ligand>
</feature>
<feature type="binding site" evidence="9">
    <location>
        <begin position="92"/>
        <end position="95"/>
    </location>
    <ligand>
        <name>dsDNA</name>
        <dbReference type="ChEBI" id="CHEBI:4705"/>
    </ligand>
</feature>
<feature type="binding site" evidence="2 3 11 13 14 15">
    <location>
        <position position="98"/>
    </location>
    <ligand>
        <name>Zn(2+)</name>
        <dbReference type="ChEBI" id="CHEBI:29105"/>
        <label>2</label>
    </ligand>
</feature>
<feature type="binding site" evidence="2 3 11 13 14 15">
    <location>
        <position position="101"/>
    </location>
    <ligand>
        <name>Zn(2+)</name>
        <dbReference type="ChEBI" id="CHEBI:29105"/>
        <label>2</label>
    </ligand>
</feature>
<feature type="binding site" evidence="9">
    <location>
        <position position="138"/>
    </location>
    <ligand>
        <name>dsDNA</name>
        <dbReference type="ChEBI" id="CHEBI:4705"/>
    </ligand>
</feature>
<feature type="binding site" evidence="2 3 11 13 14">
    <location>
        <position position="146"/>
    </location>
    <ligand>
        <name>Zn(2+)</name>
        <dbReference type="ChEBI" id="CHEBI:29105"/>
        <label>2</label>
    </ligand>
</feature>
<feature type="binding site" evidence="2 14 15">
    <location>
        <position position="149"/>
    </location>
    <ligand>
        <name>Zn(2+)</name>
        <dbReference type="ChEBI" id="CHEBI:29105"/>
        <label>2</label>
    </ligand>
</feature>
<feature type="binding site" evidence="9">
    <location>
        <position position="303"/>
    </location>
    <ligand>
        <name>dsDNA</name>
        <dbReference type="ChEBI" id="CHEBI:4705"/>
    </ligand>
</feature>
<feature type="binding site" evidence="9">
    <location>
        <begin position="305"/>
        <end position="310"/>
    </location>
    <ligand>
        <name>dsDNA</name>
        <dbReference type="ChEBI" id="CHEBI:4705"/>
    </ligand>
</feature>
<feature type="binding site" evidence="9">
    <location>
        <position position="323"/>
    </location>
    <ligand>
        <name>dsDNA</name>
        <dbReference type="ChEBI" id="CHEBI:4705"/>
    </ligand>
</feature>
<feature type="binding site" evidence="9">
    <location>
        <position position="422"/>
    </location>
    <ligand>
        <name>dsDNA</name>
        <dbReference type="ChEBI" id="CHEBI:4705"/>
    </ligand>
</feature>
<feature type="binding site" evidence="2 3 11 12 13 14 15">
    <location>
        <position position="456"/>
    </location>
    <ligand>
        <name>Mg(2+)</name>
        <dbReference type="ChEBI" id="CHEBI:18420"/>
    </ligand>
</feature>
<feature type="binding site" evidence="2 3 11 12 13 14 15">
    <location>
        <position position="458"/>
    </location>
    <ligand>
        <name>Mg(2+)</name>
        <dbReference type="ChEBI" id="CHEBI:18420"/>
    </ligand>
</feature>
<feature type="binding site" evidence="2 3 11 12 13 14 15">
    <location>
        <position position="460"/>
    </location>
    <ligand>
        <name>Mg(2+)</name>
        <dbReference type="ChEBI" id="CHEBI:18420"/>
    </ligand>
</feature>
<feature type="binding site" evidence="1">
    <location>
        <position position="573"/>
    </location>
    <ligand>
        <name>Zn(2+)</name>
        <dbReference type="ChEBI" id="CHEBI:29105"/>
        <label>3</label>
    </ligand>
</feature>
<feature type="binding site" evidence="1">
    <location>
        <position position="575"/>
    </location>
    <ligand>
        <name>Zn(2+)</name>
        <dbReference type="ChEBI" id="CHEBI:29105"/>
        <label>3</label>
    </ligand>
</feature>
<feature type="binding site" evidence="1">
    <location>
        <position position="580"/>
    </location>
    <ligand>
        <name>Zn(2+)</name>
        <dbReference type="ChEBI" id="CHEBI:29105"/>
        <label>3</label>
    </ligand>
</feature>
<feature type="binding site" evidence="1">
    <location>
        <position position="582"/>
    </location>
    <ligand>
        <name>Zn(2+)</name>
        <dbReference type="ChEBI" id="CHEBI:29105"/>
        <label>3</label>
    </ligand>
</feature>
<feature type="binding site" evidence="9">
    <location>
        <begin position="812"/>
        <end position="822"/>
    </location>
    <ligand>
        <name>dsDNA</name>
        <dbReference type="ChEBI" id="CHEBI:4705"/>
    </ligand>
</feature>
<feature type="binding site" evidence="9">
    <location>
        <position position="815"/>
    </location>
    <ligand>
        <name>dsDNA</name>
        <dbReference type="ChEBI" id="CHEBI:4705"/>
    </ligand>
</feature>
<feature type="strand" evidence="17">
    <location>
        <begin position="4"/>
        <end position="12"/>
    </location>
</feature>
<feature type="helix" evidence="17">
    <location>
        <begin position="16"/>
        <end position="22"/>
    </location>
</feature>
<feature type="strand" evidence="17">
    <location>
        <begin position="34"/>
        <end position="40"/>
    </location>
</feature>
<feature type="strand" evidence="17">
    <location>
        <begin position="42"/>
        <end position="45"/>
    </location>
</feature>
<feature type="helix" evidence="17">
    <location>
        <begin position="47"/>
        <end position="49"/>
    </location>
</feature>
<feature type="strand" evidence="17">
    <location>
        <begin position="53"/>
        <end position="55"/>
    </location>
</feature>
<feature type="turn" evidence="17">
    <location>
        <begin position="59"/>
        <end position="61"/>
    </location>
</feature>
<feature type="helix" evidence="17">
    <location>
        <begin position="65"/>
        <end position="67"/>
    </location>
</feature>
<feature type="strand" evidence="17">
    <location>
        <begin position="73"/>
        <end position="82"/>
    </location>
</feature>
<feature type="helix" evidence="17">
    <location>
        <begin position="84"/>
        <end position="86"/>
    </location>
</feature>
<feature type="helix" evidence="17">
    <location>
        <begin position="89"/>
        <end position="95"/>
    </location>
</feature>
<feature type="strand" evidence="16">
    <location>
        <begin position="99"/>
        <end position="101"/>
    </location>
</feature>
<feature type="helix" evidence="17">
    <location>
        <begin position="110"/>
        <end position="121"/>
    </location>
</feature>
<feature type="helix" evidence="17">
    <location>
        <begin position="122"/>
        <end position="124"/>
    </location>
</feature>
<feature type="helix" evidence="17">
    <location>
        <begin position="126"/>
        <end position="140"/>
    </location>
</feature>
<feature type="turn" evidence="16">
    <location>
        <begin position="143"/>
        <end position="145"/>
    </location>
</feature>
<feature type="turn" evidence="17">
    <location>
        <begin position="147"/>
        <end position="150"/>
    </location>
</feature>
<feature type="strand" evidence="17">
    <location>
        <begin position="157"/>
        <end position="160"/>
    </location>
</feature>
<feature type="strand" evidence="17">
    <location>
        <begin position="163"/>
        <end position="168"/>
    </location>
</feature>
<feature type="strand" evidence="17">
    <location>
        <begin position="171"/>
        <end position="174"/>
    </location>
</feature>
<feature type="helix" evidence="17">
    <location>
        <begin position="177"/>
        <end position="184"/>
    </location>
</feature>
<feature type="helix" evidence="17">
    <location>
        <begin position="189"/>
        <end position="194"/>
    </location>
</feature>
<feature type="turn" evidence="17">
    <location>
        <begin position="199"/>
        <end position="201"/>
    </location>
</feature>
<feature type="helix" evidence="17">
    <location>
        <begin position="205"/>
        <end position="207"/>
    </location>
</feature>
<feature type="strand" evidence="17">
    <location>
        <begin position="208"/>
        <end position="214"/>
    </location>
</feature>
<feature type="strand" evidence="17">
    <location>
        <begin position="217"/>
        <end position="220"/>
    </location>
</feature>
<feature type="helix" evidence="17">
    <location>
        <begin position="236"/>
        <end position="253"/>
    </location>
</feature>
<feature type="helix" evidence="17">
    <location>
        <begin position="259"/>
        <end position="277"/>
    </location>
</feature>
<feature type="strand" evidence="17">
    <location>
        <begin position="282"/>
        <end position="284"/>
    </location>
</feature>
<feature type="helix" evidence="17">
    <location>
        <begin position="298"/>
        <end position="303"/>
    </location>
</feature>
<feature type="strand" evidence="17">
    <location>
        <begin position="304"/>
        <end position="307"/>
    </location>
</feature>
<feature type="helix" evidence="17">
    <location>
        <begin position="309"/>
        <end position="312"/>
    </location>
</feature>
<feature type="strand" evidence="17">
    <location>
        <begin position="314"/>
        <end position="317"/>
    </location>
</feature>
<feature type="strand" evidence="17">
    <location>
        <begin position="319"/>
        <end position="328"/>
    </location>
</feature>
<feature type="strand" evidence="16">
    <location>
        <begin position="330"/>
        <end position="332"/>
    </location>
</feature>
<feature type="strand" evidence="17">
    <location>
        <begin position="334"/>
        <end position="339"/>
    </location>
</feature>
<feature type="helix" evidence="17">
    <location>
        <begin position="341"/>
        <end position="344"/>
    </location>
</feature>
<feature type="strand" evidence="17">
    <location>
        <begin position="347"/>
        <end position="352"/>
    </location>
</feature>
<feature type="turn" evidence="17">
    <location>
        <begin position="355"/>
        <end position="357"/>
    </location>
</feature>
<feature type="helix" evidence="17">
    <location>
        <begin position="358"/>
        <end position="367"/>
    </location>
</feature>
<feature type="strand" evidence="17">
    <location>
        <begin position="370"/>
        <end position="373"/>
    </location>
</feature>
<feature type="strand" evidence="17">
    <location>
        <begin position="375"/>
        <end position="379"/>
    </location>
</feature>
<feature type="strand" evidence="17">
    <location>
        <begin position="385"/>
        <end position="387"/>
    </location>
</feature>
<feature type="helix" evidence="17">
    <location>
        <begin position="388"/>
        <end position="390"/>
    </location>
</feature>
<feature type="turn" evidence="16">
    <location>
        <begin position="394"/>
        <end position="396"/>
    </location>
</feature>
<feature type="helix" evidence="17">
    <location>
        <begin position="397"/>
        <end position="400"/>
    </location>
</feature>
<feature type="strand" evidence="17">
    <location>
        <begin position="406"/>
        <end position="410"/>
    </location>
</feature>
<feature type="strand" evidence="17">
    <location>
        <begin position="416"/>
        <end position="420"/>
    </location>
</feature>
<feature type="helix" evidence="17">
    <location>
        <begin position="427"/>
        <end position="429"/>
    </location>
</feature>
<feature type="strand" evidence="17">
    <location>
        <begin position="430"/>
        <end position="437"/>
    </location>
</feature>
<feature type="strand" evidence="17">
    <location>
        <begin position="439"/>
        <end position="445"/>
    </location>
</feature>
<feature type="helix" evidence="17">
    <location>
        <begin position="447"/>
        <end position="449"/>
    </location>
</feature>
<feature type="helix" evidence="17">
    <location>
        <begin position="450"/>
        <end position="453"/>
    </location>
</feature>
<feature type="strand" evidence="17">
    <location>
        <begin position="457"/>
        <end position="459"/>
    </location>
</feature>
<feature type="strand" evidence="17">
    <location>
        <begin position="461"/>
        <end position="465"/>
    </location>
</feature>
<feature type="helix" evidence="17">
    <location>
        <begin position="470"/>
        <end position="479"/>
    </location>
</feature>
<feature type="strand" evidence="17">
    <location>
        <begin position="480"/>
        <end position="482"/>
    </location>
</feature>
<feature type="helix" evidence="17">
    <location>
        <begin position="483"/>
        <end position="485"/>
    </location>
</feature>
<feature type="strand" evidence="17">
    <location>
        <begin position="489"/>
        <end position="494"/>
    </location>
</feature>
<feature type="helix" evidence="17">
    <location>
        <begin position="501"/>
        <end position="509"/>
    </location>
</feature>
<feature type="strand" evidence="17">
    <location>
        <begin position="511"/>
        <end position="513"/>
    </location>
</feature>
<feature type="strand" evidence="17">
    <location>
        <begin position="515"/>
        <end position="517"/>
    </location>
</feature>
<feature type="helix" evidence="17">
    <location>
        <begin position="518"/>
        <end position="525"/>
    </location>
</feature>
<feature type="strand" evidence="17">
    <location>
        <begin position="538"/>
        <end position="547"/>
    </location>
</feature>
<feature type="helix" evidence="17">
    <location>
        <begin position="548"/>
        <end position="553"/>
    </location>
</feature>
<feature type="strand" evidence="17">
    <location>
        <begin position="562"/>
        <end position="565"/>
    </location>
</feature>
<feature type="helix" evidence="17">
    <location>
        <begin position="571"/>
        <end position="573"/>
    </location>
</feature>
<feature type="strand" evidence="17">
    <location>
        <begin position="576"/>
        <end position="578"/>
    </location>
</feature>
<feature type="strand" evidence="16">
    <location>
        <begin position="581"/>
        <end position="583"/>
    </location>
</feature>
<feature type="strand" evidence="17">
    <location>
        <begin position="585"/>
        <end position="589"/>
    </location>
</feature>
<feature type="strand" evidence="17">
    <location>
        <begin position="592"/>
        <end position="595"/>
    </location>
</feature>
<feature type="turn" evidence="17">
    <location>
        <begin position="600"/>
        <end position="602"/>
    </location>
</feature>
<feature type="strand" evidence="16">
    <location>
        <begin position="603"/>
        <end position="606"/>
    </location>
</feature>
<feature type="helix" evidence="17">
    <location>
        <begin position="611"/>
        <end position="617"/>
    </location>
</feature>
<feature type="helix" evidence="17">
    <location>
        <begin position="621"/>
        <end position="642"/>
    </location>
</feature>
<feature type="helix" evidence="17">
    <location>
        <begin position="648"/>
        <end position="651"/>
    </location>
</feature>
<feature type="helix" evidence="17">
    <location>
        <begin position="655"/>
        <end position="680"/>
    </location>
</feature>
<feature type="strand" evidence="17">
    <location>
        <begin position="688"/>
        <end position="690"/>
    </location>
</feature>
<feature type="helix" evidence="17">
    <location>
        <begin position="692"/>
        <end position="717"/>
    </location>
</feature>
<feature type="helix" evidence="17">
    <location>
        <begin position="724"/>
        <end position="731"/>
    </location>
</feature>
<feature type="helix" evidence="17">
    <location>
        <begin position="740"/>
        <end position="744"/>
    </location>
</feature>
<feature type="strand" evidence="17">
    <location>
        <begin position="751"/>
        <end position="757"/>
    </location>
</feature>
<feature type="strand" evidence="16">
    <location>
        <begin position="760"/>
        <end position="763"/>
    </location>
</feature>
<feature type="strand" evidence="17">
    <location>
        <begin position="764"/>
        <end position="766"/>
    </location>
</feature>
<feature type="turn" evidence="17">
    <location>
        <begin position="776"/>
        <end position="779"/>
    </location>
</feature>
<feature type="strand" evidence="17">
    <location>
        <begin position="780"/>
        <end position="782"/>
    </location>
</feature>
<feature type="turn" evidence="17">
    <location>
        <begin position="786"/>
        <end position="788"/>
    </location>
</feature>
<feature type="helix" evidence="17">
    <location>
        <begin position="792"/>
        <end position="811"/>
    </location>
</feature>
<feature type="helix" evidence="17">
    <location>
        <begin position="813"/>
        <end position="827"/>
    </location>
</feature>
<feature type="strand" evidence="17">
    <location>
        <begin position="830"/>
        <end position="832"/>
    </location>
</feature>
<feature type="strand" evidence="17">
    <location>
        <begin position="838"/>
        <end position="840"/>
    </location>
</feature>
<feature type="turn" evidence="17">
    <location>
        <begin position="841"/>
        <end position="843"/>
    </location>
</feature>
<feature type="strand" evidence="17">
    <location>
        <begin position="844"/>
        <end position="849"/>
    </location>
</feature>
<feature type="turn" evidence="17">
    <location>
        <begin position="850"/>
        <end position="853"/>
    </location>
</feature>
<feature type="turn" evidence="17">
    <location>
        <begin position="857"/>
        <end position="859"/>
    </location>
</feature>
<feature type="strand" evidence="16">
    <location>
        <begin position="860"/>
        <end position="865"/>
    </location>
</feature>
<feature type="helix" evidence="17">
    <location>
        <begin position="868"/>
        <end position="875"/>
    </location>
</feature>
<gene>
    <name evidence="2 6" type="primary">rpo1N</name>
    <name evidence="2" type="synonym">rpoA1</name>
    <name evidence="10" type="ORF">J5U23_00031</name>
</gene>
<comment type="function">
    <text evidence="2 3 4 5">DNA-dependent RNA polymerase (RNAP) catalyzes the transcription of DNA into RNA using the four ribonucleoside triphosphates as substrates. Forms the clamp head domain.</text>
</comment>
<comment type="catalytic activity">
    <reaction evidence="2 7 8 9">
        <text>RNA(n) + a ribonucleoside 5'-triphosphate = RNA(n+1) + diphosphate</text>
        <dbReference type="Rhea" id="RHEA:21248"/>
        <dbReference type="Rhea" id="RHEA-COMP:14527"/>
        <dbReference type="Rhea" id="RHEA-COMP:17342"/>
        <dbReference type="ChEBI" id="CHEBI:33019"/>
        <dbReference type="ChEBI" id="CHEBI:61557"/>
        <dbReference type="ChEBI" id="CHEBI:140395"/>
        <dbReference type="EC" id="2.7.7.6"/>
    </reaction>
</comment>
<comment type="cofactor">
    <cofactor evidence="2 3 4 5 11 12 13 14 15">
        <name>Mg(2+)</name>
        <dbReference type="ChEBI" id="CHEBI:18420"/>
    </cofactor>
</comment>
<comment type="cofactor">
    <cofactor evidence="2 3 4 5 11 12 13 14 15">
        <name>Zn(2+)</name>
        <dbReference type="ChEBI" id="CHEBI:29105"/>
    </cofactor>
    <text evidence="1 2 3 4 5">Binds 3 Zn(2+) per subunit.</text>
</comment>
<comment type="subunit">
    <text evidence="3 4 5">Part of the 13-subunit RNA polymerase complex (PubMed:19419240, PubMed:21265742, PubMed:22848102). Rpo1N and Rpo5 form a cleft which docks Rpo13. Interacts with Rpo8 on the periphery of the clamp head (PubMed:19419240, PubMed:21265742, PubMed:22848102).</text>
</comment>
<comment type="subcellular location">
    <subcellularLocation>
        <location evidence="2 5">Cytoplasm</location>
    </subcellularLocation>
</comment>
<comment type="miscellaneous">
    <text evidence="7">Corresponds to about the first two-thirds of the bacterial beta' subunit.</text>
</comment>
<comment type="similarity">
    <text evidence="2 7">Belongs to the RNA polymerase beta' chain family.</text>
</comment>
<organism>
    <name type="scientific">Saccharolobus shibatae (strain ATCC 51178 / DSM 5389 / JCM 8931 / NBRC 15437 / B12)</name>
    <name type="common">Sulfolobus shibatae</name>
    <dbReference type="NCBI Taxonomy" id="523848"/>
    <lineage>
        <taxon>Archaea</taxon>
        <taxon>Thermoproteota</taxon>
        <taxon>Thermoprotei</taxon>
        <taxon>Sulfolobales</taxon>
        <taxon>Sulfolobaceae</taxon>
        <taxon>Saccharolobus</taxon>
    </lineage>
</organism>
<dbReference type="EC" id="2.7.7.6" evidence="2 7"/>
<dbReference type="EMBL" id="FJ515665">
    <property type="protein sequence ID" value="ACL36488.1"/>
    <property type="molecule type" value="Genomic_DNA"/>
</dbReference>
<dbReference type="EMBL" id="CP077717">
    <property type="protein sequence ID" value="QXJ27177.1"/>
    <property type="molecule type" value="Genomic_DNA"/>
</dbReference>
<dbReference type="PDB" id="2WAQ">
    <property type="method" value="X-ray"/>
    <property type="resolution" value="3.35 A"/>
    <property type="chains" value="A=1-880"/>
</dbReference>
<dbReference type="PDB" id="2WB1">
    <property type="method" value="X-ray"/>
    <property type="resolution" value="3.52 A"/>
    <property type="chains" value="A/W=1-880"/>
</dbReference>
<dbReference type="PDB" id="2Y0S">
    <property type="method" value="X-ray"/>
    <property type="resolution" value="3.80 A"/>
    <property type="chains" value="A/W=1-880"/>
</dbReference>
<dbReference type="PDB" id="4AYB">
    <property type="method" value="X-ray"/>
    <property type="resolution" value="3.20 A"/>
    <property type="chains" value="A=1-880"/>
</dbReference>
<dbReference type="PDB" id="4V8S">
    <property type="method" value="X-ray"/>
    <property type="resolution" value="4.32 A"/>
    <property type="chains" value="AW/BA=1-880"/>
</dbReference>
<dbReference type="PDBsum" id="2WAQ"/>
<dbReference type="PDBsum" id="2WB1"/>
<dbReference type="PDBsum" id="2Y0S"/>
<dbReference type="PDBsum" id="4AYB"/>
<dbReference type="PDBsum" id="4V8S"/>
<dbReference type="SMR" id="B8YB53"/>
<dbReference type="KEGG" id="sshi:J5U23_00031"/>
<dbReference type="OrthoDB" id="371812at2157"/>
<dbReference type="BRENDA" id="2.7.7.6">
    <property type="organism ID" value="6162"/>
</dbReference>
<dbReference type="EvolutionaryTrace" id="B8YB53"/>
<dbReference type="Proteomes" id="UP000694018">
    <property type="component" value="Chromosome"/>
</dbReference>
<dbReference type="GO" id="GO:0005737">
    <property type="term" value="C:cytoplasm"/>
    <property type="evidence" value="ECO:0007669"/>
    <property type="project" value="UniProtKB-SubCell"/>
</dbReference>
<dbReference type="GO" id="GO:0000428">
    <property type="term" value="C:DNA-directed RNA polymerase complex"/>
    <property type="evidence" value="ECO:0000314"/>
    <property type="project" value="UniProtKB"/>
</dbReference>
<dbReference type="GO" id="GO:0003677">
    <property type="term" value="F:DNA binding"/>
    <property type="evidence" value="ECO:0007669"/>
    <property type="project" value="UniProtKB-UniRule"/>
</dbReference>
<dbReference type="GO" id="GO:0003899">
    <property type="term" value="F:DNA-directed RNA polymerase activity"/>
    <property type="evidence" value="ECO:0007669"/>
    <property type="project" value="UniProtKB-UniRule"/>
</dbReference>
<dbReference type="GO" id="GO:0000287">
    <property type="term" value="F:magnesium ion binding"/>
    <property type="evidence" value="ECO:0007669"/>
    <property type="project" value="UniProtKB-UniRule"/>
</dbReference>
<dbReference type="GO" id="GO:0008270">
    <property type="term" value="F:zinc ion binding"/>
    <property type="evidence" value="ECO:0007669"/>
    <property type="project" value="UniProtKB-UniRule"/>
</dbReference>
<dbReference type="GO" id="GO:0006351">
    <property type="term" value="P:DNA-templated transcription"/>
    <property type="evidence" value="ECO:0007669"/>
    <property type="project" value="UniProtKB-UniRule"/>
</dbReference>
<dbReference type="CDD" id="cd02582">
    <property type="entry name" value="RNAP_archeal_A"/>
    <property type="match status" value="1"/>
</dbReference>
<dbReference type="FunFam" id="2.40.40.20:FF:000019">
    <property type="entry name" value="DNA-directed RNA polymerase II subunit RPB1"/>
    <property type="match status" value="1"/>
</dbReference>
<dbReference type="FunFam" id="2.40.40.20:FF:000018">
    <property type="entry name" value="DNA-directed RNA polymerase subunit"/>
    <property type="match status" value="1"/>
</dbReference>
<dbReference type="Gene3D" id="1.10.10.1950">
    <property type="match status" value="1"/>
</dbReference>
<dbReference type="Gene3D" id="1.10.132.30">
    <property type="match status" value="1"/>
</dbReference>
<dbReference type="Gene3D" id="2.40.40.20">
    <property type="match status" value="1"/>
</dbReference>
<dbReference type="Gene3D" id="2.60.40.2940">
    <property type="match status" value="1"/>
</dbReference>
<dbReference type="Gene3D" id="4.10.320.40">
    <property type="match status" value="1"/>
</dbReference>
<dbReference type="Gene3D" id="6.10.250.2940">
    <property type="match status" value="1"/>
</dbReference>
<dbReference type="Gene3D" id="6.20.50.80">
    <property type="match status" value="1"/>
</dbReference>
<dbReference type="Gene3D" id="3.30.1490.180">
    <property type="entry name" value="RNA polymerase ii"/>
    <property type="match status" value="1"/>
</dbReference>
<dbReference type="Gene3D" id="4.10.860.120">
    <property type="entry name" value="RNA polymerase II, clamp domain"/>
    <property type="match status" value="2"/>
</dbReference>
<dbReference type="HAMAP" id="MF_00863">
    <property type="entry name" value="RNApol_arch_Rpo1N"/>
    <property type="match status" value="1"/>
</dbReference>
<dbReference type="InterPro" id="IPR045867">
    <property type="entry name" value="DNA-dir_RpoC_beta_prime"/>
</dbReference>
<dbReference type="InterPro" id="IPR000722">
    <property type="entry name" value="RNA_pol_asu"/>
</dbReference>
<dbReference type="InterPro" id="IPR006592">
    <property type="entry name" value="RNA_pol_N"/>
</dbReference>
<dbReference type="InterPro" id="IPR007080">
    <property type="entry name" value="RNA_pol_Rpb1_1"/>
</dbReference>
<dbReference type="InterPro" id="IPR007066">
    <property type="entry name" value="RNA_pol_Rpb1_3"/>
</dbReference>
<dbReference type="InterPro" id="IPR007083">
    <property type="entry name" value="RNA_pol_Rpb1_4"/>
</dbReference>
<dbReference type="InterPro" id="IPR007081">
    <property type="entry name" value="RNA_pol_Rpb1_5"/>
</dbReference>
<dbReference type="InterPro" id="IPR044893">
    <property type="entry name" value="RNA_pol_Rpb1_clamp_domain"/>
</dbReference>
<dbReference type="InterPro" id="IPR038120">
    <property type="entry name" value="Rpb1_funnel_sf"/>
</dbReference>
<dbReference type="InterPro" id="IPR012758">
    <property type="entry name" value="RPO1N"/>
</dbReference>
<dbReference type="NCBIfam" id="NF006336">
    <property type="entry name" value="PRK08566.1"/>
    <property type="match status" value="1"/>
</dbReference>
<dbReference type="NCBIfam" id="TIGR02390">
    <property type="entry name" value="RNA_pol_rpoA1"/>
    <property type="match status" value="1"/>
</dbReference>
<dbReference type="PANTHER" id="PTHR19376">
    <property type="entry name" value="DNA-DIRECTED RNA POLYMERASE"/>
    <property type="match status" value="1"/>
</dbReference>
<dbReference type="PANTHER" id="PTHR19376:SF32">
    <property type="entry name" value="DNA-DIRECTED RNA POLYMERASE III SUBUNIT RPC1"/>
    <property type="match status" value="1"/>
</dbReference>
<dbReference type="Pfam" id="PF04997">
    <property type="entry name" value="RNA_pol_Rpb1_1"/>
    <property type="match status" value="1"/>
</dbReference>
<dbReference type="Pfam" id="PF00623">
    <property type="entry name" value="RNA_pol_Rpb1_2"/>
    <property type="match status" value="1"/>
</dbReference>
<dbReference type="Pfam" id="PF04983">
    <property type="entry name" value="RNA_pol_Rpb1_3"/>
    <property type="match status" value="1"/>
</dbReference>
<dbReference type="Pfam" id="PF05000">
    <property type="entry name" value="RNA_pol_Rpb1_4"/>
    <property type="match status" value="1"/>
</dbReference>
<dbReference type="Pfam" id="PF04998">
    <property type="entry name" value="RNA_pol_Rpb1_5"/>
    <property type="match status" value="1"/>
</dbReference>
<dbReference type="SMART" id="SM00663">
    <property type="entry name" value="RPOLA_N"/>
    <property type="match status" value="1"/>
</dbReference>
<dbReference type="SUPFAM" id="SSF64484">
    <property type="entry name" value="beta and beta-prime subunits of DNA dependent RNA-polymerase"/>
    <property type="match status" value="1"/>
</dbReference>
<accession>B8YB53</accession>
<accession>A0A8F5BKY4</accession>
<sequence length="880" mass="99625">MSEKNIKGIKFGILSPDEIRKMSVTAIITPDVYDEDGTPIEGSVMDPRLGVIEPGQKCPTCGNTLGNCPGHFGHIELVRPVIHVGFVKHVYEFLKATCRRCGRVKISEDEIEKYSRIYNAIKKRWPSAARRLTEYVKKTAMKAQVCPHCGEKQFKIKLEKPYNFYEERKEGVAKLTPSDIRERLEKVPESDVEILGYDPTTSRPEWMILTVLPVPPITIRPSIMIESGIRAEDDLTHKLVDIVRINERLKESIDAGAPQLIIEDLWDLLQYHVATYFDNEIPGLPPSKHRSGRPLRTLAQRLKGKEGRFRGNLSGKRVDFSSRTVISPDPNISIDEVGVPEIIARTLTVPERITPWNIEKLRQFVINGPDKWPGANYVIRPDGRRIDLRYVKDRKELASTLAPGYVVERHLTDGDVVLFNRQPSLHRISMMAHRVRVLKGLTFRLNLLVCPPYNADFDGDEMNLHVPQSEEAIAEAKEIMLVHKNIITPRYGGPIIGAAQDYISGAYLLTVKTTLLTKEEAQQILGVADVKIDLGEPAILAPREYYTGKQVVSAFLPKDFNFHGQANVSSGPRLCKNEDCPHDSYVVIKNGILLEGVFDKKAIGNQQPESILHWLIKEYSDEYGKWLMDNLFRVFIRFVELQGFTMRLEDVSLGDDVKKEIYNEIDRAKVEVDNLIQKYKNGELEPIPGRTLEESLENYILDTLDKLRSTAGDIASKYLDPFNFAYVMARTGARGSVLNITQMAAMLGQQSVRGERIKRGYMTRTLPHFKPYDISPEARGFIYSSFRTGLKPTELFFHAAGGREGLVDTAVRTSQSGYMQRRLINALSDLRAEYDGTVRSLYGEVIQVAYGDDGVFPMYSAHGKTVDVNRIFERVVGWKT</sequence>
<proteinExistence type="evidence at protein level"/>
<evidence type="ECO:0000250" key="1">
    <source>
        <dbReference type="UniProtKB" id="P11512"/>
    </source>
</evidence>
<evidence type="ECO:0000255" key="2">
    <source>
        <dbReference type="HAMAP-Rule" id="MF_00863"/>
    </source>
</evidence>
<evidence type="ECO:0000269" key="3">
    <source>
    </source>
</evidence>
<evidence type="ECO:0000269" key="4">
    <source>
    </source>
</evidence>
<evidence type="ECO:0000269" key="5">
    <source>
    </source>
</evidence>
<evidence type="ECO:0000303" key="6">
    <source>
    </source>
</evidence>
<evidence type="ECO:0000305" key="7">
    <source>
    </source>
</evidence>
<evidence type="ECO:0000305" key="8">
    <source>
    </source>
</evidence>
<evidence type="ECO:0000305" key="9">
    <source>
    </source>
</evidence>
<evidence type="ECO:0000312" key="10">
    <source>
        <dbReference type="EMBL" id="QXJ27177.1"/>
    </source>
</evidence>
<evidence type="ECO:0007744" key="11">
    <source>
        <dbReference type="PDB" id="2WAQ"/>
    </source>
</evidence>
<evidence type="ECO:0007744" key="12">
    <source>
        <dbReference type="PDB" id="2WB1"/>
    </source>
</evidence>
<evidence type="ECO:0007744" key="13">
    <source>
        <dbReference type="PDB" id="2Y0S"/>
    </source>
</evidence>
<evidence type="ECO:0007744" key="14">
    <source>
        <dbReference type="PDB" id="4AYB"/>
    </source>
</evidence>
<evidence type="ECO:0007744" key="15">
    <source>
        <dbReference type="PDB" id="4V8S"/>
    </source>
</evidence>
<evidence type="ECO:0007829" key="16">
    <source>
        <dbReference type="PDB" id="2WAQ"/>
    </source>
</evidence>
<evidence type="ECO:0007829" key="17">
    <source>
        <dbReference type="PDB" id="4AYB"/>
    </source>
</evidence>